<feature type="chain" id="PRO_1000204645" description="Porphobilinogen deaminase">
    <location>
        <begin position="1"/>
        <end position="309"/>
    </location>
</feature>
<feature type="modified residue" description="S-(dipyrrolylmethanemethyl)cysteine" evidence="1">
    <location>
        <position position="241"/>
    </location>
</feature>
<name>HEM3_CAMC1</name>
<sequence>MKEIKIATRKSILALWQSEHIKARIEAQHKGMKVVLEGMKTKGDVILDTPLAKIGGKGLFTKELEDSMLKGETDIAVHSLKDVPVVFPEGLRLAAICSREDTRDAMISEKFAKFSDLPHGAKVGTTSLRRKMQLLIMRPDLEIISLRGNVQTRLRKLKEGEFDAIILAMAGINRLNIKAEVAHIYTFGFDEMIPAMGQGALGIEARDEKQILDETSFLNDENAVIETTIERDFVSVLEGGCQVPIGISARLKGDEISIDAIVGLPDGSEYIKDSLKTSKDKFQSVGKELAHKFIEKGARELLKRAEEMA</sequence>
<accession>A7ZD37</accession>
<keyword id="KW-0627">Porphyrin biosynthesis</keyword>
<keyword id="KW-0808">Transferase</keyword>
<organism>
    <name type="scientific">Campylobacter concisus (strain 13826)</name>
    <dbReference type="NCBI Taxonomy" id="360104"/>
    <lineage>
        <taxon>Bacteria</taxon>
        <taxon>Pseudomonadati</taxon>
        <taxon>Campylobacterota</taxon>
        <taxon>Epsilonproteobacteria</taxon>
        <taxon>Campylobacterales</taxon>
        <taxon>Campylobacteraceae</taxon>
        <taxon>Campylobacter</taxon>
    </lineage>
</organism>
<gene>
    <name evidence="1" type="primary">hemC</name>
    <name type="ordered locus">Ccon26_08230</name>
    <name type="ORF">CCC13826_1048</name>
</gene>
<reference key="1">
    <citation type="submission" date="2007-10" db="EMBL/GenBank/DDBJ databases">
        <title>Genome sequence of Campylobacter concisus 13826 isolated from human feces.</title>
        <authorList>
            <person name="Fouts D.E."/>
            <person name="Mongodin E.F."/>
            <person name="Puiu D."/>
            <person name="Sebastian Y."/>
            <person name="Miller W.G."/>
            <person name="Mandrell R.E."/>
            <person name="On S."/>
            <person name="Nelson K.E."/>
        </authorList>
    </citation>
    <scope>NUCLEOTIDE SEQUENCE [LARGE SCALE GENOMIC DNA]</scope>
    <source>
        <strain>13826</strain>
    </source>
</reference>
<evidence type="ECO:0000255" key="1">
    <source>
        <dbReference type="HAMAP-Rule" id="MF_00260"/>
    </source>
</evidence>
<comment type="function">
    <text evidence="1">Tetrapolymerization of the monopyrrole PBG into the hydroxymethylbilane pre-uroporphyrinogen in several discrete steps.</text>
</comment>
<comment type="catalytic activity">
    <reaction evidence="1">
        <text>4 porphobilinogen + H2O = hydroxymethylbilane + 4 NH4(+)</text>
        <dbReference type="Rhea" id="RHEA:13185"/>
        <dbReference type="ChEBI" id="CHEBI:15377"/>
        <dbReference type="ChEBI" id="CHEBI:28938"/>
        <dbReference type="ChEBI" id="CHEBI:57845"/>
        <dbReference type="ChEBI" id="CHEBI:58126"/>
        <dbReference type="EC" id="2.5.1.61"/>
    </reaction>
</comment>
<comment type="cofactor">
    <cofactor evidence="1">
        <name>dipyrromethane</name>
        <dbReference type="ChEBI" id="CHEBI:60342"/>
    </cofactor>
    <text evidence="1">Binds 1 dipyrromethane group covalently.</text>
</comment>
<comment type="pathway">
    <text evidence="1">Porphyrin-containing compound metabolism; protoporphyrin-IX biosynthesis; coproporphyrinogen-III from 5-aminolevulinate: step 2/4.</text>
</comment>
<comment type="subunit">
    <text evidence="1">Monomer.</text>
</comment>
<comment type="miscellaneous">
    <text evidence="1">The porphobilinogen subunits are added to the dipyrromethane group.</text>
</comment>
<comment type="similarity">
    <text evidence="1">Belongs to the HMBS family.</text>
</comment>
<proteinExistence type="inferred from homology"/>
<dbReference type="EC" id="2.5.1.61" evidence="1"/>
<dbReference type="EMBL" id="CP000792">
    <property type="protein sequence ID" value="EAT97835.1"/>
    <property type="molecule type" value="Genomic_DNA"/>
</dbReference>
<dbReference type="RefSeq" id="WP_012001641.1">
    <property type="nucleotide sequence ID" value="NC_009802.2"/>
</dbReference>
<dbReference type="SMR" id="A7ZD37"/>
<dbReference type="STRING" id="360104.CCC13826_1048"/>
<dbReference type="KEGG" id="cco:CCC13826_1048"/>
<dbReference type="eggNOG" id="COG0181">
    <property type="taxonomic scope" value="Bacteria"/>
</dbReference>
<dbReference type="HOGENOM" id="CLU_019704_0_2_7"/>
<dbReference type="OrthoDB" id="9810298at2"/>
<dbReference type="UniPathway" id="UPA00251">
    <property type="reaction ID" value="UER00319"/>
</dbReference>
<dbReference type="Proteomes" id="UP000001121">
    <property type="component" value="Chromosome"/>
</dbReference>
<dbReference type="GO" id="GO:0005737">
    <property type="term" value="C:cytoplasm"/>
    <property type="evidence" value="ECO:0007669"/>
    <property type="project" value="TreeGrafter"/>
</dbReference>
<dbReference type="GO" id="GO:0004418">
    <property type="term" value="F:hydroxymethylbilane synthase activity"/>
    <property type="evidence" value="ECO:0007669"/>
    <property type="project" value="UniProtKB-UniRule"/>
</dbReference>
<dbReference type="GO" id="GO:0006782">
    <property type="term" value="P:protoporphyrinogen IX biosynthetic process"/>
    <property type="evidence" value="ECO:0007669"/>
    <property type="project" value="UniProtKB-UniRule"/>
</dbReference>
<dbReference type="CDD" id="cd13646">
    <property type="entry name" value="PBP2_EcHMBS_like"/>
    <property type="match status" value="1"/>
</dbReference>
<dbReference type="FunFam" id="3.40.190.10:FF:000004">
    <property type="entry name" value="Porphobilinogen deaminase"/>
    <property type="match status" value="1"/>
</dbReference>
<dbReference type="FunFam" id="3.40.190.10:FF:000005">
    <property type="entry name" value="Porphobilinogen deaminase"/>
    <property type="match status" value="1"/>
</dbReference>
<dbReference type="Gene3D" id="3.40.190.10">
    <property type="entry name" value="Periplasmic binding protein-like II"/>
    <property type="match status" value="2"/>
</dbReference>
<dbReference type="Gene3D" id="3.30.160.40">
    <property type="entry name" value="Porphobilinogen deaminase, C-terminal domain"/>
    <property type="match status" value="1"/>
</dbReference>
<dbReference type="HAMAP" id="MF_00260">
    <property type="entry name" value="Porphobil_deam"/>
    <property type="match status" value="1"/>
</dbReference>
<dbReference type="InterPro" id="IPR000860">
    <property type="entry name" value="HemC"/>
</dbReference>
<dbReference type="InterPro" id="IPR022419">
    <property type="entry name" value="Porphobilin_deaminase_cofac_BS"/>
</dbReference>
<dbReference type="InterPro" id="IPR022417">
    <property type="entry name" value="Porphobilin_deaminase_N"/>
</dbReference>
<dbReference type="InterPro" id="IPR022418">
    <property type="entry name" value="Porphobilinogen_deaminase_C"/>
</dbReference>
<dbReference type="InterPro" id="IPR036803">
    <property type="entry name" value="Porphobilinogen_deaminase_C_sf"/>
</dbReference>
<dbReference type="NCBIfam" id="TIGR00212">
    <property type="entry name" value="hemC"/>
    <property type="match status" value="1"/>
</dbReference>
<dbReference type="PANTHER" id="PTHR11557">
    <property type="entry name" value="PORPHOBILINOGEN DEAMINASE"/>
    <property type="match status" value="1"/>
</dbReference>
<dbReference type="PANTHER" id="PTHR11557:SF0">
    <property type="entry name" value="PORPHOBILINOGEN DEAMINASE"/>
    <property type="match status" value="1"/>
</dbReference>
<dbReference type="Pfam" id="PF01379">
    <property type="entry name" value="Porphobil_deam"/>
    <property type="match status" value="1"/>
</dbReference>
<dbReference type="Pfam" id="PF03900">
    <property type="entry name" value="Porphobil_deamC"/>
    <property type="match status" value="1"/>
</dbReference>
<dbReference type="PIRSF" id="PIRSF001438">
    <property type="entry name" value="4pyrrol_synth_OHMeBilane_synth"/>
    <property type="match status" value="1"/>
</dbReference>
<dbReference type="PRINTS" id="PR00151">
    <property type="entry name" value="PORPHBDMNASE"/>
</dbReference>
<dbReference type="SUPFAM" id="SSF53850">
    <property type="entry name" value="Periplasmic binding protein-like II"/>
    <property type="match status" value="1"/>
</dbReference>
<dbReference type="SUPFAM" id="SSF54782">
    <property type="entry name" value="Porphobilinogen deaminase (hydroxymethylbilane synthase), C-terminal domain"/>
    <property type="match status" value="1"/>
</dbReference>
<dbReference type="PROSITE" id="PS00533">
    <property type="entry name" value="PORPHOBILINOGEN_DEAM"/>
    <property type="match status" value="1"/>
</dbReference>
<protein>
    <recommendedName>
        <fullName evidence="1">Porphobilinogen deaminase</fullName>
        <shortName evidence="1">PBG</shortName>
        <ecNumber evidence="1">2.5.1.61</ecNumber>
    </recommendedName>
    <alternativeName>
        <fullName evidence="1">Hydroxymethylbilane synthase</fullName>
        <shortName evidence="1">HMBS</shortName>
    </alternativeName>
    <alternativeName>
        <fullName evidence="1">Pre-uroporphyrinogen synthase</fullName>
    </alternativeName>
</protein>